<sequence length="243" mass="28208">MSQSKNLLYPEKWLSRASTGVRVACELRMRIISGLIESGTILSENKLAAEFSVSRSPIREALKILASEKIIRLERMGAVVIGLTEKEIGEIYDVRLVMETFVFERLGRANVDELVTDLSKILEMMKVSIKYKDADEFSFQDVLFHETIVRSINHSYILMIWNNLKPVMESFILLSMRARLKEKYEDFERILDNHELYIKAIKTKDRDLMLKSLHQNFDDVQGKVEDLWLSQQMLAKGAEQEND</sequence>
<name>GNTR_BACLI</name>
<proteinExistence type="predicted"/>
<evidence type="ECO:0000255" key="1">
    <source>
        <dbReference type="PROSITE-ProRule" id="PRU00307"/>
    </source>
</evidence>
<organism>
    <name type="scientific">Bacillus licheniformis</name>
    <dbReference type="NCBI Taxonomy" id="1402"/>
    <lineage>
        <taxon>Bacteria</taxon>
        <taxon>Bacillati</taxon>
        <taxon>Bacillota</taxon>
        <taxon>Bacilli</taxon>
        <taxon>Bacillales</taxon>
        <taxon>Bacillaceae</taxon>
        <taxon>Bacillus</taxon>
    </lineage>
</organism>
<feature type="chain" id="PRO_0000050647" description="Gluconate operon transcriptional repressor">
    <location>
        <begin position="1"/>
        <end position="243"/>
    </location>
</feature>
<feature type="domain" description="HTH gntR-type" evidence="1">
    <location>
        <begin position="17"/>
        <end position="83"/>
    </location>
</feature>
<feature type="DNA-binding region" description="H-T-H motif" evidence="1">
    <location>
        <begin position="44"/>
        <end position="63"/>
    </location>
</feature>
<protein>
    <recommendedName>
        <fullName>Gluconate operon transcriptional repressor</fullName>
    </recommendedName>
    <alternativeName>
        <fullName>P28 protein</fullName>
    </alternativeName>
</protein>
<dbReference type="EMBL" id="D31631">
    <property type="protein sequence ID" value="BAA06501.1"/>
    <property type="molecule type" value="Genomic_DNA"/>
</dbReference>
<dbReference type="PIR" id="JC2303">
    <property type="entry name" value="JC2303"/>
</dbReference>
<dbReference type="SMR" id="P46833"/>
<dbReference type="PATRIC" id="fig|1402.64.peg.2235"/>
<dbReference type="GO" id="GO:0003677">
    <property type="term" value="F:DNA binding"/>
    <property type="evidence" value="ECO:0007669"/>
    <property type="project" value="UniProtKB-KW"/>
</dbReference>
<dbReference type="GO" id="GO:0003700">
    <property type="term" value="F:DNA-binding transcription factor activity"/>
    <property type="evidence" value="ECO:0007669"/>
    <property type="project" value="InterPro"/>
</dbReference>
<dbReference type="GO" id="GO:0019521">
    <property type="term" value="P:D-gluconate metabolic process"/>
    <property type="evidence" value="ECO:0007669"/>
    <property type="project" value="UniProtKB-KW"/>
</dbReference>
<dbReference type="Gene3D" id="1.20.120.530">
    <property type="entry name" value="GntR ligand-binding domain-like"/>
    <property type="match status" value="1"/>
</dbReference>
<dbReference type="Gene3D" id="1.10.10.10">
    <property type="entry name" value="Winged helix-like DNA-binding domain superfamily/Winged helix DNA-binding domain"/>
    <property type="match status" value="1"/>
</dbReference>
<dbReference type="InterPro" id="IPR011711">
    <property type="entry name" value="GntR_C"/>
</dbReference>
<dbReference type="InterPro" id="IPR008920">
    <property type="entry name" value="TF_FadR/GntR_C"/>
</dbReference>
<dbReference type="InterPro" id="IPR000524">
    <property type="entry name" value="Tscrpt_reg_HTH_GntR"/>
</dbReference>
<dbReference type="InterPro" id="IPR036388">
    <property type="entry name" value="WH-like_DNA-bd_sf"/>
</dbReference>
<dbReference type="InterPro" id="IPR036390">
    <property type="entry name" value="WH_DNA-bd_sf"/>
</dbReference>
<dbReference type="PANTHER" id="PTHR43537:SF24">
    <property type="entry name" value="GLUCONATE OPERON TRANSCRIPTIONAL REPRESSOR"/>
    <property type="match status" value="1"/>
</dbReference>
<dbReference type="PANTHER" id="PTHR43537">
    <property type="entry name" value="TRANSCRIPTIONAL REGULATOR, GNTR FAMILY"/>
    <property type="match status" value="1"/>
</dbReference>
<dbReference type="Pfam" id="PF07729">
    <property type="entry name" value="FCD"/>
    <property type="match status" value="1"/>
</dbReference>
<dbReference type="Pfam" id="PF00392">
    <property type="entry name" value="GntR"/>
    <property type="match status" value="1"/>
</dbReference>
<dbReference type="PRINTS" id="PR00035">
    <property type="entry name" value="HTHGNTR"/>
</dbReference>
<dbReference type="SMART" id="SM00895">
    <property type="entry name" value="FCD"/>
    <property type="match status" value="1"/>
</dbReference>
<dbReference type="SMART" id="SM00345">
    <property type="entry name" value="HTH_GNTR"/>
    <property type="match status" value="1"/>
</dbReference>
<dbReference type="SUPFAM" id="SSF48008">
    <property type="entry name" value="GntR ligand-binding domain-like"/>
    <property type="match status" value="1"/>
</dbReference>
<dbReference type="SUPFAM" id="SSF46785">
    <property type="entry name" value="Winged helix' DNA-binding domain"/>
    <property type="match status" value="1"/>
</dbReference>
<dbReference type="PROSITE" id="PS50949">
    <property type="entry name" value="HTH_GNTR"/>
    <property type="match status" value="1"/>
</dbReference>
<reference key="1">
    <citation type="journal article" date="1994" name="DNA Res.">
        <title>Nucleotide sequence and features of the Bacillus licheniformis gnt operon.</title>
        <authorList>
            <person name="Yoshida K."/>
            <person name="Seki S."/>
            <person name="Fujita Y."/>
        </authorList>
    </citation>
    <scope>NUCLEOTIDE SEQUENCE [GENOMIC DNA]</scope>
    <source>
        <strain>BGSC5A2</strain>
    </source>
</reference>
<accession>P46833</accession>
<keyword id="KW-0238">DNA-binding</keyword>
<keyword id="KW-0311">Gluconate utilization</keyword>
<keyword id="KW-0678">Repressor</keyword>
<keyword id="KW-0804">Transcription</keyword>
<keyword id="KW-0805">Transcription regulation</keyword>
<gene>
    <name type="primary">gntR</name>
</gene>
<comment type="function">
    <text>Transcriptional repressor of the gluconate operon (gntRKPZ), which encodes the proteins for gluconate utilization. Represses mRNA synthesis by binding to the gnt operator; the binding is suppressed by gluconate or glucono-delta-lactone.</text>
</comment>